<protein>
    <recommendedName>
        <fullName evidence="14">Probable 2' cyclic ADP-D-ribose synthase TcpB</fullName>
        <shortName evidence="14">2'cADPR synthase TcpB</shortName>
        <ecNumber evidence="1 17">3.2.2.-</ecNumber>
    </recommendedName>
    <alternativeName>
        <fullName evidence="14">Brucella TIR-containing protein 1</fullName>
        <shortName evidence="14">Btp1</shortName>
    </alternativeName>
    <alternativeName>
        <fullName evidence="14">NAD(+) hydrolase TcpB</fullName>
        <ecNumber evidence="10">3.2.2.6</ecNumber>
    </alternativeName>
    <alternativeName>
        <fullName evidence="12">TIR domain-containing protein in Brucella</fullName>
        <shortName evidence="12">TcpB</shortName>
    </alternativeName>
</protein>
<keyword id="KW-0002">3D-structure</keyword>
<keyword id="KW-1032">Host cell membrane</keyword>
<keyword id="KW-1043">Host membrane</keyword>
<keyword id="KW-0378">Hydrolase</keyword>
<keyword id="KW-0446">Lipid-binding</keyword>
<keyword id="KW-0472">Membrane</keyword>
<keyword id="KW-0520">NAD</keyword>
<keyword id="KW-0964">Secreted</keyword>
<keyword id="KW-0843">Virulence</keyword>
<proteinExistence type="evidence at protein level"/>
<organism>
    <name type="scientific">Brucella melitensis biotype 1 (strain ATCC 23456 / CCUG 17765 / NCTC 10094 / 16M)</name>
    <dbReference type="NCBI Taxonomy" id="224914"/>
    <lineage>
        <taxon>Bacteria</taxon>
        <taxon>Pseudomonadati</taxon>
        <taxon>Pseudomonadota</taxon>
        <taxon>Alphaproteobacteria</taxon>
        <taxon>Hyphomicrobiales</taxon>
        <taxon>Brucellaceae</taxon>
        <taxon>Brucella/Ochrobactrum group</taxon>
        <taxon>Brucella</taxon>
    </lineage>
</organism>
<comment type="function">
    <text evidence="4 7 8 9 10 14">Virulence factor that interferes with host Toll-like receptor 2 (TLR2) and TLR4 signaling, resulting in the reduction of dendritic cell maturation, inhibition of pro-inflammatory cytokine secretion and impaired NF-kappa-B activation in macrophages. Interferes with host TLR4 signaling by abolishing host TLR4-TIRAP interaction (but not host TIRAP-MYD88 interaction) and its downstream signaling (PubMed:19196716, PubMed:24265315, PubMed:24275656, PubMed:27311859). Inhibits host TLR 2 induced NF-kappa-B activation and TNF (tumor necrosis factor) secretion (PubMed:19196716). Binds phosphoinositide (PtdIns) via its N-terminal domain (PubMed:19196716). Has NAD(+) hydrolase (NADase) activity, catalyzes cleavage of NAD(+) into ADP-D-ribose (ADPR) and nicotinamide (PubMed:29395922). Also generates a cyclization variant of cyclic ADPR (cADPR), termed v-cADPR (probably 2'cADPR) (Probable) (PubMed:29395922).</text>
</comment>
<comment type="catalytic activity">
    <reaction evidence="10">
        <text>NAD(+) + H2O = ADP-D-ribose + nicotinamide + H(+)</text>
        <dbReference type="Rhea" id="RHEA:16301"/>
        <dbReference type="ChEBI" id="CHEBI:15377"/>
        <dbReference type="ChEBI" id="CHEBI:15378"/>
        <dbReference type="ChEBI" id="CHEBI:17154"/>
        <dbReference type="ChEBI" id="CHEBI:57540"/>
        <dbReference type="ChEBI" id="CHEBI:57967"/>
        <dbReference type="EC" id="3.2.2.6"/>
    </reaction>
    <physiologicalReaction direction="left-to-right" evidence="10">
        <dbReference type="Rhea" id="RHEA:16302"/>
    </physiologicalReaction>
</comment>
<comment type="catalytic activity">
    <reaction evidence="1 17">
        <text>NAD(+) = 2'cADPR + nicotinamide + H(+)</text>
        <dbReference type="Rhea" id="RHEA:75299"/>
        <dbReference type="ChEBI" id="CHEBI:15378"/>
        <dbReference type="ChEBI" id="CHEBI:17154"/>
        <dbReference type="ChEBI" id="CHEBI:57540"/>
        <dbReference type="ChEBI" id="CHEBI:194248"/>
    </reaction>
</comment>
<comment type="subunit">
    <text evidence="5 6 7 8 9">Homodimer; may also form oligomers (PubMed:24076024, PubMed:24265315, PubMed:24275656). Interacts with host TIRAP (PubMed:24265315, PubMed:27311859). Interacts with host MYD88 (PubMed:22155231, PubMed:24265315). Interaction with host MYD88 was not confirmed by another study (PubMed:27311859). Interacts with host TLR4 (PubMed:24265315). Abolishes the interaction of host TIRAP with TLR4 (PubMed:22155231, PubMed:24265315, PubMed:27311859).</text>
</comment>
<comment type="interaction">
    <interactant intactId="EBI-8754687">
        <id>Q8YF53</id>
    </interactant>
    <interactant intactId="EBI-8754687">
        <id>Q8YF53</id>
        <label>tcpB</label>
    </interactant>
    <organismsDiffer>false</organismsDiffer>
    <experiments>4</experiments>
</comment>
<comment type="subcellular location">
    <subcellularLocation>
        <location evidence="15">Secreted</location>
    </subcellularLocation>
    <subcellularLocation>
        <location evidence="4">Host cell membrane</location>
    </subcellularLocation>
    <text evidence="4 16">Translocated into the host cell via the type IV secretion system (T4SS) (Probable). Upon overexpression in HEK or HeLa cells forms tubular networks that colocalize with microtubules; nocodazole treatment decreases the thickness of the network but does not disrupt it (PubMed:19196716).</text>
</comment>
<comment type="domain">
    <text evidence="4 6 7 8 10">The TIR domain mediates NAD(+) hydrolase (NADase) activity (PubMed:29395922). The TIR domain crystallizes as a homodimer (PubMed:24076024, PubMed:24265315, PubMed:24275656). The TIR domain is a structural mimic of the TIR domain of host TIRAP (PubMed:24275656). Whole protein and the TIR domain (residues 120-250) abolish the interaction of host proteins TIRAP and TLR4 (PubMed:24265315). The N-terminal region is required for localization to the host cell membrane while the TIR domain is required for tubule formation (PubMed:19196716).</text>
</comment>
<comment type="disruption phenotype">
    <text evidence="4 9">Significantly slowed infection in IRF-1-/- mice infected with strain 16M / GR023 deletion bacteria, increased expression of TNF and interleukin-beta (PubMed:19196716). Slightly reduced colonization of BALB/c mice 5 weeks post-infection (PubMed:27311859).</text>
</comment>
<comment type="caution">
    <text evidence="14">The protein might be 25 residues longer at the N-terminus.</text>
</comment>
<reference evidence="18" key="1">
    <citation type="journal article" date="2002" name="Proc. Natl. Acad. Sci. U.S.A.">
        <title>The genome sequence of the facultative intracellular pathogen Brucella melitensis.</title>
        <authorList>
            <person name="DelVecchio V.G."/>
            <person name="Kapatral V."/>
            <person name="Redkar R.J."/>
            <person name="Patra G."/>
            <person name="Mujer C."/>
            <person name="Los T."/>
            <person name="Ivanova N."/>
            <person name="Anderson I."/>
            <person name="Bhattacharyya A."/>
            <person name="Lykidis A."/>
            <person name="Reznik G."/>
            <person name="Jablonski L."/>
            <person name="Larsen N."/>
            <person name="D'Souza M."/>
            <person name="Bernal A."/>
            <person name="Mazur M."/>
            <person name="Goltsman E."/>
            <person name="Selkov E."/>
            <person name="Elzer P.H."/>
            <person name="Hagius S."/>
            <person name="O'Callaghan D."/>
            <person name="Letesson J.-J."/>
            <person name="Haselkorn R."/>
            <person name="Kyrpides N.C."/>
            <person name="Overbeek R."/>
        </authorList>
    </citation>
    <scope>NUCLEOTIDE SEQUENCE [LARGE SCALE GENOMIC DNA]</scope>
    <source>
        <strain>ATCC 23456 / CCUG 17765 / NCTC 10094 / 16M</strain>
    </source>
</reference>
<reference key="2">
    <citation type="journal article" date="2009" name="J. Biol. Chem.">
        <title>Brucella TIR Domain-containing Protein Mimics Properties of the Toll-like Receptor Adaptor Protein TIRAP.</title>
        <authorList>
            <person name="Radhakrishnan G.K."/>
            <person name="Yu Q."/>
            <person name="Harms J.S."/>
            <person name="Splitter G.A."/>
        </authorList>
    </citation>
    <scope>FUNCTION</scope>
    <scope>SUBCELLULAR LOCATION</scope>
    <scope>DOMAIN</scope>
    <scope>LIPID-BINDING</scope>
    <scope>DISRUPTION PHENOTYPE</scope>
    <scope>MUTAGENESIS OF 46-LYS--ARG-48; 46-LYS--LYS-54; 53-LYS-LYS-54 AND GLY-158</scope>
    <source>
        <strain>ATCC 23456 / CCUG 17765 / NCTC 10094 / 16M</strain>
    </source>
</reference>
<reference key="3">
    <citation type="journal article" date="2012" name="Biochem. Biophys. Res. Commun.">
        <title>The Brucella TIR-like protein TcpB interacts with the death domain of MyD88.</title>
        <authorList>
            <person name="Chaudhary A."/>
            <person name="Ganguly K."/>
            <person name="Cabantous S."/>
            <person name="Waldo G.S."/>
            <person name="Micheva-Viteva S.N."/>
            <person name="Nag K."/>
            <person name="Hlavacek W.S."/>
            <person name="Tung C.S."/>
        </authorList>
    </citation>
    <scope>POSSIBLE INTERACTION WITH HOST MYD88</scope>
    <source>
        <strain>ATCC 23456 / CCUG 17765 / NCTC 10094 / 16M</strain>
    </source>
</reference>
<reference key="4">
    <citation type="journal article" date="2016" name="Biochem. Biophys. Res. Commun.">
        <title>Brucella TIR-like protein TcpB/Btp1 specifically targets the host adaptor protein MAL/TIRAP to promote infection.</title>
        <authorList>
            <person name="Li W."/>
            <person name="Ke Y."/>
            <person name="Wang Y."/>
            <person name="Yang M."/>
            <person name="Gao J."/>
            <person name="Zhan S."/>
            <person name="Xinying D."/>
            <person name="Huang L."/>
            <person name="Li W."/>
            <person name="Chen Z."/>
            <person name="Li J."/>
        </authorList>
    </citation>
    <scope>FUNCTION</scope>
    <scope>INTERACTION WITH HOST TIRAP</scope>
    <scope>DISRUPTION PHENOTYPE</scope>
    <source>
        <strain>ATCC 23456 / CCUG 17765 / NCTC 10094 / 16M</strain>
    </source>
</reference>
<reference key="5">
    <citation type="journal article" date="2018" name="Curr. Biol.">
        <title>TIR domain proteins are an ancient family of NAD+-consuming enzymes.</title>
        <authorList>
            <person name="Essuman K."/>
            <person name="Summers D.W."/>
            <person name="Sasaki Y."/>
            <person name="Mao X."/>
            <person name="Yim A.K.Y."/>
            <person name="DiAntonio A."/>
            <person name="Milbrandt J."/>
        </authorList>
    </citation>
    <scope>FUNCTION</scope>
    <scope>CATALYTIC ACTIVITY</scope>
</reference>
<reference evidence="21" key="6">
    <citation type="journal article" date="2013" name="FEBS Lett.">
        <title>Structure of the Toll/interleukin 1 receptor (TIR) domain of the immunosuppressive Brucella effector BtpA/Btp1/TcpB.</title>
        <authorList>
            <person name="Kaplan-Turkoz B."/>
            <person name="Koelblen T."/>
            <person name="Felix C."/>
            <person name="Candusso M.P."/>
            <person name="O'Callaghan D."/>
            <person name="Vergunst A.C."/>
            <person name="Terradot L."/>
        </authorList>
    </citation>
    <scope>X-RAY CRYSTALLOGRAPHY (3.15 ANGSTROMS) OF 75-250</scope>
    <scope>SUBUNIT</scope>
    <scope>MUTAGENESIS OF ARG-142; ASP-151 AND SER-235</scope>
    <source>
        <strain>ATCC 23456 / CCUG 17765 / NCTC 10094 / 16M</strain>
    </source>
</reference>
<reference evidence="19" key="7">
    <citation type="journal article" date="2014" name="J. Biol. Chem.">
        <title>Mechanism of bacterial interference with TLR4 signaling by Brucella Toll/interleukin-1 receptor domain-containing protein TcpB.</title>
        <authorList>
            <person name="Alaidarous M."/>
            <person name="Ve T."/>
            <person name="Casey L.W."/>
            <person name="Valkov E."/>
            <person name="Ericsson D.J."/>
            <person name="Ullah M.O."/>
            <person name="Schembri M.A."/>
            <person name="Mansell A."/>
            <person name="Sweet M.J."/>
            <person name="Kobe B."/>
        </authorList>
    </citation>
    <scope>X-RAY CRYSTALLOGRAPHY (2.57 ANGSTROMS) OF 120-250</scope>
    <scope>FUNCTION</scope>
    <scope>INTERACTION WITH HOST MYD88; HOST TIRAP AND HOST TLR4</scope>
    <scope>SUBUNIT</scope>
    <scope>DOMAIN</scope>
    <scope>MUTAGENESIS OF GLY-158; LYS-213; ARG-220; ASN-233 AND LEU-236</scope>
</reference>
<reference evidence="20" key="8">
    <citation type="journal article" date="2014" name="J. Biol. Chem.">
        <title>Crystal structures of the Toll/Interleukin-1 receptor (TIR) domains from the Brucella protein TcpB and host adaptor TIRAP reveal mechanisms of molecular mimicry.</title>
        <authorList>
            <person name="Snyder G.A."/>
            <person name="Deredge D."/>
            <person name="Waldhuber A."/>
            <person name="Fresquez T."/>
            <person name="Wilkins D.Z."/>
            <person name="Smith P.T."/>
            <person name="Durr S."/>
            <person name="Cirl C."/>
            <person name="Jiang J."/>
            <person name="Jennings W."/>
            <person name="Luchetti T."/>
            <person name="Snyder N."/>
            <person name="Sundberg E.J."/>
            <person name="Wintrode P."/>
            <person name="Miethke T."/>
            <person name="Xiao T.S."/>
        </authorList>
    </citation>
    <scope>X-RAY CRYSTALLOGRAPHY (2.30 ANGSTROMS) OF 113-250</scope>
    <scope>FUNCTION</scope>
    <scope>SUBUNIT</scope>
    <scope>INTERACTION WITH HOST TIRAP</scope>
    <scope>MUTAGENESIS OF 124-SER--SER-127</scope>
    <source>
        <strain>ATCC 23456 / CCUG 17765 / NCTC 10094 / 16M</strain>
    </source>
</reference>
<feature type="chain" id="PRO_0000458020" description="Probable 2' cyclic ADP-D-ribose synthase TcpB">
    <location>
        <begin position="1"/>
        <end position="250"/>
    </location>
</feature>
<feature type="domain" description="TIR" evidence="2">
    <location>
        <begin position="117"/>
        <end position="250"/>
    </location>
</feature>
<feature type="region of interest" description="Necessary and sufficient for phosphoinositide binding" evidence="4">
    <location>
        <begin position="1"/>
        <end position="117"/>
    </location>
</feature>
<feature type="region of interest" description="Disordered" evidence="3">
    <location>
        <begin position="1"/>
        <end position="46"/>
    </location>
</feature>
<feature type="compositionally biased region" description="Low complexity" evidence="3">
    <location>
        <begin position="14"/>
        <end position="23"/>
    </location>
</feature>
<feature type="compositionally biased region" description="Basic and acidic residues" evidence="3">
    <location>
        <begin position="30"/>
        <end position="39"/>
    </location>
</feature>
<feature type="active site" evidence="2">
    <location>
        <position position="192"/>
    </location>
</feature>
<feature type="mutagenesis site" description="Loss of phosphoinositide-binding, considerably decreased suppression of NF-kappa-B activation." evidence="4">
    <original>KKRADIAKK</original>
    <variation>AAAADIAAA</variation>
    <location>
        <begin position="46"/>
        <end position="54"/>
    </location>
</feature>
<feature type="mutagenesis site" description="Decreased phosphoinositide-binding." evidence="4">
    <original>KKR</original>
    <variation>AAA</variation>
    <location>
        <begin position="46"/>
        <end position="48"/>
    </location>
</feature>
<feature type="mutagenesis site" description="Decreased phosphoinositide-binding." evidence="4">
    <original>KK</original>
    <variation>AA</variation>
    <location>
        <begin position="53"/>
        <end position="54"/>
    </location>
</feature>
<feature type="mutagenesis site" description="Stabilizes hydrophobic core, no change in interaction with host TIRAP or its downstream signaling." evidence="8">
    <original>SHAS</original>
    <variation>AHAI</variation>
    <location>
        <begin position="124"/>
        <end position="127"/>
    </location>
</feature>
<feature type="mutagenesis site" description="Does not affect homodimerization." evidence="6">
    <original>R</original>
    <variation>E</variation>
    <location>
        <position position="142"/>
    </location>
</feature>
<feature type="mutagenesis site" description="Does not affect homodimerization." evidence="6">
    <original>D</original>
    <variation>R</variation>
    <location>
        <position position="151"/>
    </location>
</feature>
<feature type="mutagenesis site" description="No longer forms tubular networks in host cells. Loss of interaction with host TLR4, significantly decreases interaction with TIRAP, no change in interaction with MyD88, no longer inhibits TLR4-mediated activation of NF-kappa-B." evidence="4 7">
    <original>G</original>
    <variation>A</variation>
    <location>
        <position position="158"/>
    </location>
</feature>
<feature type="mutagenesis site" description="No longer inhibits TLR4-mediated activation of NF-kappa-B." evidence="7">
    <original>K</original>
    <variation>E</variation>
    <location>
        <position position="213"/>
    </location>
</feature>
<feature type="mutagenesis site" description="No longer inhibits TLR4-mediated activation of NF-kappa-B." evidence="7">
    <original>R</original>
    <variation>A</variation>
    <location>
        <position position="220"/>
    </location>
</feature>
<feature type="mutagenesis site" description="No longer inhibits TLR4-mediated activation of NF-kappa-B." evidence="7">
    <original>N</original>
    <variation>A</variation>
    <location>
        <position position="233"/>
    </location>
</feature>
<feature type="mutagenesis site" description="Impaired homodimerization." evidence="6">
    <original>S</original>
    <variation>A</variation>
    <location>
        <position position="235"/>
    </location>
</feature>
<feature type="mutagenesis site" description="No longer inhibits TLR4-mediated activation of NF-kappa-B." evidence="7">
    <original>L</original>
    <variation>A</variation>
    <location>
        <position position="236"/>
    </location>
</feature>
<feature type="strand" evidence="22">
    <location>
        <begin position="120"/>
        <end position="126"/>
    </location>
</feature>
<feature type="helix" evidence="22">
    <location>
        <begin position="127"/>
        <end position="129"/>
    </location>
</feature>
<feature type="turn" evidence="22">
    <location>
        <begin position="130"/>
        <end position="132"/>
    </location>
</feature>
<feature type="helix" evidence="22">
    <location>
        <begin position="133"/>
        <end position="143"/>
    </location>
</feature>
<feature type="strand" evidence="22">
    <location>
        <begin position="157"/>
        <end position="159"/>
    </location>
</feature>
<feature type="helix" evidence="22">
    <location>
        <begin position="161"/>
        <end position="169"/>
    </location>
</feature>
<feature type="strand" evidence="22">
    <location>
        <begin position="173"/>
        <end position="179"/>
    </location>
</feature>
<feature type="helix" evidence="22">
    <location>
        <begin position="181"/>
        <end position="184"/>
    </location>
</feature>
<feature type="helix" evidence="22">
    <location>
        <begin position="190"/>
        <end position="194"/>
    </location>
</feature>
<feature type="strand" evidence="22">
    <location>
        <begin position="207"/>
        <end position="211"/>
    </location>
</feature>
<feature type="helix" evidence="22">
    <location>
        <begin position="216"/>
        <end position="220"/>
    </location>
</feature>
<feature type="helix" evidence="22">
    <location>
        <begin position="224"/>
        <end position="228"/>
    </location>
</feature>
<feature type="turn" evidence="22">
    <location>
        <begin position="234"/>
        <end position="236"/>
    </location>
</feature>
<feature type="helix" evidence="22">
    <location>
        <begin position="239"/>
        <end position="250"/>
    </location>
</feature>
<dbReference type="EC" id="3.2.2.-" evidence="1 17"/>
<dbReference type="EC" id="3.2.2.6" evidence="10"/>
<dbReference type="EMBL" id="AE008917">
    <property type="protein sequence ID" value="AAL52855.1"/>
    <property type="molecule type" value="Genomic_DNA"/>
</dbReference>
<dbReference type="PIR" id="AD3461">
    <property type="entry name" value="AD3461"/>
</dbReference>
<dbReference type="PDB" id="4C7M">
    <property type="method" value="X-ray"/>
    <property type="resolution" value="3.15 A"/>
    <property type="chains" value="A/B/C/D=120-250"/>
</dbReference>
<dbReference type="PDB" id="4LQC">
    <property type="method" value="X-ray"/>
    <property type="resolution" value="2.30 A"/>
    <property type="chains" value="A/B=113-250"/>
</dbReference>
<dbReference type="PDB" id="4LZP">
    <property type="method" value="X-ray"/>
    <property type="resolution" value="3.15 A"/>
    <property type="chains" value="A/B/C/D=75-250"/>
</dbReference>
<dbReference type="PDBsum" id="4C7M"/>
<dbReference type="PDBsum" id="4LQC"/>
<dbReference type="PDBsum" id="4LZP"/>
<dbReference type="SMR" id="Q8YF53"/>
<dbReference type="IntAct" id="Q8YF53">
    <property type="interactions" value="1"/>
</dbReference>
<dbReference type="MINT" id="Q8YF53"/>
<dbReference type="KEGG" id="bme:BMEI1674"/>
<dbReference type="eggNOG" id="COG4916">
    <property type="taxonomic scope" value="Bacteria"/>
</dbReference>
<dbReference type="EvolutionaryTrace" id="Q8YF53"/>
<dbReference type="PHI-base" id="PHI:6367"/>
<dbReference type="Proteomes" id="UP000000419">
    <property type="component" value="Chromosome I"/>
</dbReference>
<dbReference type="GO" id="GO:0005576">
    <property type="term" value="C:extracellular region"/>
    <property type="evidence" value="ECO:0007669"/>
    <property type="project" value="UniProtKB-SubCell"/>
</dbReference>
<dbReference type="GO" id="GO:0020002">
    <property type="term" value="C:host cell plasma membrane"/>
    <property type="evidence" value="ECO:0007669"/>
    <property type="project" value="UniProtKB-SubCell"/>
</dbReference>
<dbReference type="GO" id="GO:0016020">
    <property type="term" value="C:membrane"/>
    <property type="evidence" value="ECO:0007669"/>
    <property type="project" value="UniProtKB-KW"/>
</dbReference>
<dbReference type="GO" id="GO:0016787">
    <property type="term" value="F:hydrolase activity"/>
    <property type="evidence" value="ECO:0007669"/>
    <property type="project" value="UniProtKB-KW"/>
</dbReference>
<dbReference type="GO" id="GO:0042802">
    <property type="term" value="F:identical protein binding"/>
    <property type="evidence" value="ECO:0000353"/>
    <property type="project" value="IntAct"/>
</dbReference>
<dbReference type="GO" id="GO:0008289">
    <property type="term" value="F:lipid binding"/>
    <property type="evidence" value="ECO:0007669"/>
    <property type="project" value="UniProtKB-KW"/>
</dbReference>
<dbReference type="GO" id="GO:0007165">
    <property type="term" value="P:signal transduction"/>
    <property type="evidence" value="ECO:0007669"/>
    <property type="project" value="InterPro"/>
</dbReference>
<dbReference type="GO" id="GO:0141028">
    <property type="term" value="P:symbiont-mediated perturbation of host microtubule cytoskeleton"/>
    <property type="evidence" value="ECO:0000315"/>
    <property type="project" value="AgBase"/>
</dbReference>
<dbReference type="Gene3D" id="3.40.50.10140">
    <property type="entry name" value="Toll/interleukin-1 receptor homology (TIR) domain"/>
    <property type="match status" value="1"/>
</dbReference>
<dbReference type="InterPro" id="IPR000157">
    <property type="entry name" value="TIR_dom"/>
</dbReference>
<dbReference type="InterPro" id="IPR035897">
    <property type="entry name" value="Toll_tir_struct_dom_sf"/>
</dbReference>
<dbReference type="PANTHER" id="PTHR32009:SF39">
    <property type="entry name" value="TIR DOMAIN-CONTAINING PROTEIN"/>
    <property type="match status" value="1"/>
</dbReference>
<dbReference type="PANTHER" id="PTHR32009">
    <property type="entry name" value="TMV RESISTANCE PROTEIN N-LIKE"/>
    <property type="match status" value="1"/>
</dbReference>
<dbReference type="Pfam" id="PF13676">
    <property type="entry name" value="TIR_2"/>
    <property type="match status" value="1"/>
</dbReference>
<dbReference type="SMART" id="SM00255">
    <property type="entry name" value="TIR"/>
    <property type="match status" value="1"/>
</dbReference>
<dbReference type="SUPFAM" id="SSF52200">
    <property type="entry name" value="Toll/Interleukin receptor TIR domain"/>
    <property type="match status" value="1"/>
</dbReference>
<dbReference type="PROSITE" id="PS50104">
    <property type="entry name" value="TIR"/>
    <property type="match status" value="1"/>
</dbReference>
<gene>
    <name evidence="11" type="primary">tcpB</name>
    <name type="synonym">btp1</name>
    <name evidence="13" type="synonym">btpA</name>
    <name evidence="18" type="ordered locus">BMEI1674</name>
</gene>
<evidence type="ECO:0000250" key="1">
    <source>
        <dbReference type="UniProtKB" id="A0A009IHW8"/>
    </source>
</evidence>
<evidence type="ECO:0000255" key="2">
    <source>
        <dbReference type="PROSITE-ProRule" id="PRU00204"/>
    </source>
</evidence>
<evidence type="ECO:0000256" key="3">
    <source>
        <dbReference type="SAM" id="MobiDB-lite"/>
    </source>
</evidence>
<evidence type="ECO:0000269" key="4">
    <source>
    </source>
</evidence>
<evidence type="ECO:0000269" key="5">
    <source>
    </source>
</evidence>
<evidence type="ECO:0000269" key="6">
    <source>
    </source>
</evidence>
<evidence type="ECO:0000269" key="7">
    <source>
    </source>
</evidence>
<evidence type="ECO:0000269" key="8">
    <source>
    </source>
</evidence>
<evidence type="ECO:0000269" key="9">
    <source>
    </source>
</evidence>
<evidence type="ECO:0000269" key="10">
    <source>
    </source>
</evidence>
<evidence type="ECO:0000303" key="11">
    <source>
    </source>
</evidence>
<evidence type="ECO:0000303" key="12">
    <source>
    </source>
</evidence>
<evidence type="ECO:0000303" key="13">
    <source>
    </source>
</evidence>
<evidence type="ECO:0000305" key="14"/>
<evidence type="ECO:0000305" key="15">
    <source>
    </source>
</evidence>
<evidence type="ECO:0000305" key="16">
    <source>
    </source>
</evidence>
<evidence type="ECO:0000305" key="17">
    <source>
    </source>
</evidence>
<evidence type="ECO:0000312" key="18">
    <source>
        <dbReference type="EMBL" id="AAL52855.1"/>
    </source>
</evidence>
<evidence type="ECO:0000312" key="19">
    <source>
        <dbReference type="PDB" id="4C7M"/>
    </source>
</evidence>
<evidence type="ECO:0007744" key="20">
    <source>
        <dbReference type="PDB" id="4LQC"/>
    </source>
</evidence>
<evidence type="ECO:0007744" key="21">
    <source>
        <dbReference type="PDB" id="4LZP"/>
    </source>
</evidence>
<evidence type="ECO:0007829" key="22">
    <source>
        <dbReference type="PDB" id="4LQC"/>
    </source>
</evidence>
<accession>Q8YF53</accession>
<name>TCPB_BRUME</name>
<sequence length="250" mass="27999">MSKEKQAQSKAHKAQQAISSAKSLSTQKSKMSELERATRDGAAIGKKRADIAKKIADKAKQLSSYQAKQFKADEQAVKKVAQEQKRLSDERTKHEAFIKQSLSSMRTTASATMEAEEEYDFFISHASEDKEAFVQDLVAALRDLGAKIFYDAYTLKVGDSLRRKIDQGLANSKFGIVVLSEHFFSKQWPARELDGLTAMEIGGQTRILPIWHKVSYDEVRRFSPSLADKVALNTSLKSVEEIAKELHSLI</sequence>